<feature type="signal peptide" evidence="2">
    <location>
        <begin position="1"/>
        <end position="30"/>
    </location>
</feature>
<feature type="chain" id="PRO_5010686327" description="Protein masquerade" evidence="10">
    <location>
        <begin position="31"/>
        <end position="1047"/>
    </location>
</feature>
<feature type="region of interest" description="CLIP 1" evidence="2">
    <location>
        <begin position="54"/>
        <end position="87"/>
    </location>
</feature>
<feature type="region of interest" description="Disordered" evidence="5">
    <location>
        <begin position="98"/>
        <end position="189"/>
    </location>
</feature>
<feature type="region of interest" description="CLIP 2" evidence="2">
    <location>
        <begin position="192"/>
        <end position="224"/>
    </location>
</feature>
<feature type="region of interest" description="Disordered" evidence="5">
    <location>
        <begin position="252"/>
        <end position="335"/>
    </location>
</feature>
<feature type="region of interest" description="CLIP 3" evidence="2">
    <location>
        <begin position="343"/>
        <end position="374"/>
    </location>
</feature>
<feature type="region of interest" description="Disordered" evidence="5">
    <location>
        <begin position="376"/>
        <end position="428"/>
    </location>
</feature>
<feature type="region of interest" description="CLIP 4" evidence="2">
    <location>
        <begin position="457"/>
        <end position="492"/>
    </location>
</feature>
<feature type="region of interest" description="Disordered" evidence="5">
    <location>
        <begin position="498"/>
        <end position="527"/>
    </location>
</feature>
<feature type="region of interest" description="CLIP 5" evidence="2">
    <location>
        <begin position="532"/>
        <end position="567"/>
    </location>
</feature>
<feature type="region of interest" description="Disordered" evidence="5">
    <location>
        <begin position="583"/>
        <end position="673"/>
    </location>
</feature>
<feature type="region of interest" description="Peptidase S1" evidence="3">
    <location>
        <begin position="803"/>
        <end position="1043"/>
    </location>
</feature>
<feature type="compositionally biased region" description="Low complexity" evidence="5">
    <location>
        <begin position="98"/>
        <end position="139"/>
    </location>
</feature>
<feature type="compositionally biased region" description="Low complexity" evidence="5">
    <location>
        <begin position="148"/>
        <end position="175"/>
    </location>
</feature>
<feature type="compositionally biased region" description="Basic and acidic residues" evidence="5">
    <location>
        <begin position="176"/>
        <end position="189"/>
    </location>
</feature>
<feature type="compositionally biased region" description="Low complexity" evidence="5">
    <location>
        <begin position="263"/>
        <end position="280"/>
    </location>
</feature>
<feature type="compositionally biased region" description="Acidic residues" evidence="5">
    <location>
        <begin position="307"/>
        <end position="325"/>
    </location>
</feature>
<feature type="compositionally biased region" description="Pro residues" evidence="5">
    <location>
        <begin position="501"/>
        <end position="527"/>
    </location>
</feature>
<feature type="compositionally biased region" description="Pro residues" evidence="5">
    <location>
        <begin position="588"/>
        <end position="606"/>
    </location>
</feature>
<feature type="compositionally biased region" description="Pro residues" evidence="5">
    <location>
        <begin position="613"/>
        <end position="638"/>
    </location>
</feature>
<feature type="compositionally biased region" description="Pro residues" evidence="5">
    <location>
        <begin position="650"/>
        <end position="661"/>
    </location>
</feature>
<feature type="compositionally biased region" description="Low complexity" evidence="5">
    <location>
        <begin position="662"/>
        <end position="672"/>
    </location>
</feature>
<feature type="glycosylation site" description="N-linked (GlcNAc...) asparagine" evidence="4">
    <location>
        <position position="95"/>
    </location>
</feature>
<feature type="glycosylation site" description="N-linked (GlcNAc...) asparagine" evidence="4">
    <location>
        <position position="251"/>
    </location>
</feature>
<feature type="glycosylation site" description="N-linked (GlcNAc...) asparagine" evidence="4">
    <location>
        <position position="287"/>
    </location>
</feature>
<feature type="glycosylation site" description="N-linked (GlcNAc...) asparagine" evidence="4">
    <location>
        <position position="582"/>
    </location>
</feature>
<feature type="glycosylation site" description="N-linked (GlcNAc...) asparagine" evidence="4">
    <location>
        <position position="726"/>
    </location>
</feature>
<feature type="glycosylation site" description="N-linked (GlcNAc...) asparagine" evidence="4">
    <location>
        <position position="794"/>
    </location>
</feature>
<feature type="disulfide bond" evidence="1">
    <location>
        <begin position="56"/>
        <end position="85"/>
    </location>
</feature>
<feature type="disulfide bond" evidence="1">
    <location>
        <begin position="60"/>
        <end position="78"/>
    </location>
</feature>
<feature type="disulfide bond" evidence="1">
    <location>
        <begin position="69"/>
        <end position="86"/>
    </location>
</feature>
<feature type="disulfide bond" evidence="1">
    <location>
        <begin position="193"/>
        <end position="222"/>
    </location>
</feature>
<feature type="disulfide bond" evidence="1">
    <location>
        <begin position="197"/>
        <end position="216"/>
    </location>
</feature>
<feature type="disulfide bond" evidence="1">
    <location>
        <begin position="206"/>
        <end position="223"/>
    </location>
</feature>
<feature type="disulfide bond" evidence="1">
    <location>
        <begin position="344"/>
        <end position="372"/>
    </location>
</feature>
<feature type="disulfide bond" evidence="1">
    <location>
        <begin position="348"/>
        <end position="366"/>
    </location>
</feature>
<feature type="disulfide bond" evidence="1">
    <location>
        <begin position="357"/>
        <end position="373"/>
    </location>
</feature>
<feature type="disulfide bond" evidence="1">
    <location>
        <begin position="458"/>
        <end position="490"/>
    </location>
</feature>
<feature type="disulfide bond" evidence="1">
    <location>
        <begin position="462"/>
        <end position="484"/>
    </location>
</feature>
<feature type="disulfide bond" evidence="1">
    <location>
        <begin position="471"/>
        <end position="491"/>
    </location>
</feature>
<feature type="disulfide bond" evidence="1">
    <location>
        <begin position="533"/>
        <end position="565"/>
    </location>
</feature>
<feature type="disulfide bond" evidence="1">
    <location>
        <begin position="537"/>
        <end position="558"/>
    </location>
</feature>
<feature type="disulfide bond" evidence="1">
    <location>
        <begin position="546"/>
        <end position="566"/>
    </location>
</feature>
<feature type="disulfide bond" evidence="1">
    <location>
        <begin position="682"/>
        <end position="916"/>
    </location>
</feature>
<feature type="disulfide bond" evidence="3">
    <location>
        <begin position="829"/>
        <end position="845"/>
    </location>
</feature>
<feature type="disulfide bond" evidence="3">
    <location>
        <begin position="930"/>
        <end position="1001"/>
    </location>
</feature>
<feature type="disulfide bond" evidence="3">
    <location>
        <begin position="961"/>
        <end position="981"/>
    </location>
</feature>
<feature type="disulfide bond" evidence="3">
    <location>
        <begin position="991"/>
        <end position="1019"/>
    </location>
</feature>
<feature type="splice variant" id="VSP_059330" description="In isoform C." evidence="9">
    <original>KD</original>
    <variation>N</variation>
    <location>
        <begin position="191"/>
        <end position="192"/>
    </location>
</feature>
<feature type="sequence conflict" description="In Ref. 1; AAC46512." evidence="9" ref="1">
    <original>ATV</original>
    <variation>PTA</variation>
    <location>
        <begin position="158"/>
        <end position="160"/>
    </location>
</feature>
<feature type="sequence conflict" description="In Ref. 1; AAC46512." evidence="9" ref="1">
    <original>N</original>
    <variation>K</variation>
    <location>
        <position position="247"/>
    </location>
</feature>
<feature type="sequence conflict" description="In Ref. 1; AAC46512." evidence="9" ref="1">
    <original>S</original>
    <variation>C</variation>
    <location>
        <position position="290"/>
    </location>
</feature>
<feature type="sequence conflict" description="In Ref. 1; AAC46512." evidence="9" ref="1">
    <original>E</original>
    <variation>G</variation>
    <location>
        <position position="370"/>
    </location>
</feature>
<feature type="sequence conflict" description="In Ref. 1; AAC46512." evidence="9" ref="1">
    <original>SG</original>
    <variation>WP</variation>
    <location>
        <begin position="647"/>
        <end position="648"/>
    </location>
</feature>
<feature type="sequence conflict" description="In Ref. 1; AAC46512." evidence="9" ref="1">
    <original>R</original>
    <variation>C</variation>
    <location>
        <position position="713"/>
    </location>
</feature>
<feature type="sequence conflict" description="In Ref. 1; AAC46512." evidence="9" ref="1">
    <original>G</original>
    <variation>R</variation>
    <location>
        <position position="936"/>
    </location>
</feature>
<dbReference type="EMBL" id="U18130">
    <property type="protein sequence ID" value="AAC46512.1"/>
    <property type="molecule type" value="Genomic_DNA"/>
</dbReference>
<dbReference type="EMBL" id="AE014296">
    <property type="protein sequence ID" value="AAF47850.1"/>
    <property type="molecule type" value="Genomic_DNA"/>
</dbReference>
<dbReference type="EMBL" id="AE014296">
    <property type="protein sequence ID" value="AGB94103.1"/>
    <property type="molecule type" value="Genomic_DNA"/>
</dbReference>
<dbReference type="EMBL" id="AY052044">
    <property type="protein sequence ID" value="AAK93468.1"/>
    <property type="status" value="ALT_INIT"/>
    <property type="molecule type" value="mRNA"/>
</dbReference>
<dbReference type="EMBL" id="BT001597">
    <property type="protein sequence ID" value="AAN71352.1"/>
    <property type="molecule type" value="mRNA"/>
</dbReference>
<dbReference type="PIR" id="A55617">
    <property type="entry name" value="A55617"/>
</dbReference>
<dbReference type="RefSeq" id="NP_001261408.1">
    <molecule id="Q9VZH2-2"/>
    <property type="nucleotide sequence ID" value="NM_001274479.1"/>
</dbReference>
<dbReference type="RefSeq" id="NP_523919.1">
    <molecule id="Q9VZH2-1"/>
    <property type="nucleotide sequence ID" value="NM_079195.3"/>
</dbReference>
<dbReference type="SMR" id="Q9VZH2"/>
<dbReference type="STRING" id="7227.FBpp0073116"/>
<dbReference type="MEROPS" id="S01.024"/>
<dbReference type="GlyCosmos" id="Q9VZH2">
    <property type="glycosylation" value="6 sites, No reported glycans"/>
</dbReference>
<dbReference type="GlyGen" id="Q9VZH2">
    <property type="glycosylation" value="9 sites"/>
</dbReference>
<dbReference type="PaxDb" id="7227-FBpp0073116"/>
<dbReference type="EnsemblMetazoa" id="FBtr0073260">
    <molecule id="Q9VZH2-1"/>
    <property type="protein sequence ID" value="FBpp0073116"/>
    <property type="gene ID" value="FBgn0011653"/>
</dbReference>
<dbReference type="EnsemblMetazoa" id="FBtr0332659">
    <molecule id="Q9VZH2-2"/>
    <property type="protein sequence ID" value="FBpp0304905"/>
    <property type="gene ID" value="FBgn0011653"/>
</dbReference>
<dbReference type="GeneID" id="38499"/>
<dbReference type="KEGG" id="dme:Dmel_CG15002"/>
<dbReference type="UCSC" id="CG15002-RB">
    <molecule id="Q9VZH2-1"/>
    <property type="organism name" value="d. melanogaster"/>
</dbReference>
<dbReference type="AGR" id="FB:FBgn0011653"/>
<dbReference type="CTD" id="38499"/>
<dbReference type="FlyBase" id="FBgn0011653">
    <property type="gene designation" value="mas"/>
</dbReference>
<dbReference type="VEuPathDB" id="VectorBase:FBgn0011653"/>
<dbReference type="eggNOG" id="KOG3627">
    <property type="taxonomic scope" value="Eukaryota"/>
</dbReference>
<dbReference type="GeneTree" id="ENSGT00940000172378"/>
<dbReference type="InParanoid" id="Q9VZH2"/>
<dbReference type="OMA" id="CIENAPG"/>
<dbReference type="OrthoDB" id="6437225at2759"/>
<dbReference type="PhylomeDB" id="Q9VZH2"/>
<dbReference type="BioGRID-ORCS" id="38499">
    <property type="hits" value="0 hits in 1 CRISPR screen"/>
</dbReference>
<dbReference type="GenomeRNAi" id="38499"/>
<dbReference type="PRO" id="PR:Q9VZH2"/>
<dbReference type="Proteomes" id="UP000000803">
    <property type="component" value="Chromosome 3L"/>
</dbReference>
<dbReference type="Bgee" id="FBgn0011653">
    <property type="expression patterns" value="Expressed in eye disc (Drosophila) and 26 other cell types or tissues"/>
</dbReference>
<dbReference type="ExpressionAtlas" id="Q9VZH2">
    <property type="expression patterns" value="baseline and differential"/>
</dbReference>
<dbReference type="GO" id="GO:0030424">
    <property type="term" value="C:axon"/>
    <property type="evidence" value="ECO:0000314"/>
    <property type="project" value="UniProtKB"/>
</dbReference>
<dbReference type="GO" id="GO:0005737">
    <property type="term" value="C:cytoplasm"/>
    <property type="evidence" value="ECO:0000314"/>
    <property type="project" value="UniProtKB"/>
</dbReference>
<dbReference type="GO" id="GO:0005615">
    <property type="term" value="C:extracellular space"/>
    <property type="evidence" value="ECO:0000314"/>
    <property type="project" value="UniProtKB"/>
</dbReference>
<dbReference type="GO" id="GO:0043025">
    <property type="term" value="C:neuronal cell body"/>
    <property type="evidence" value="ECO:0000314"/>
    <property type="project" value="UniProtKB"/>
</dbReference>
<dbReference type="GO" id="GO:0005886">
    <property type="term" value="C:plasma membrane"/>
    <property type="evidence" value="ECO:0000314"/>
    <property type="project" value="FlyBase"/>
</dbReference>
<dbReference type="GO" id="GO:0061564">
    <property type="term" value="P:axon development"/>
    <property type="evidence" value="ECO:0000315"/>
    <property type="project" value="UniProtKB"/>
</dbReference>
<dbReference type="GO" id="GO:0007417">
    <property type="term" value="P:central nervous system development"/>
    <property type="evidence" value="ECO:0000315"/>
    <property type="project" value="UniProtKB"/>
</dbReference>
<dbReference type="GO" id="GO:0016203">
    <property type="term" value="P:muscle attachment"/>
    <property type="evidence" value="ECO:0000315"/>
    <property type="project" value="UniProtKB"/>
</dbReference>
<dbReference type="GO" id="GO:0106030">
    <property type="term" value="P:neuron projection fasciculation"/>
    <property type="evidence" value="ECO:0000315"/>
    <property type="project" value="UniProtKB"/>
</dbReference>
<dbReference type="GO" id="GO:0007422">
    <property type="term" value="P:peripheral nervous system development"/>
    <property type="evidence" value="ECO:0000315"/>
    <property type="project" value="UniProtKB"/>
</dbReference>
<dbReference type="GO" id="GO:0010976">
    <property type="term" value="P:positive regulation of neuron projection development"/>
    <property type="evidence" value="ECO:0000315"/>
    <property type="project" value="UniProtKB"/>
</dbReference>
<dbReference type="GO" id="GO:0006508">
    <property type="term" value="P:proteolysis"/>
    <property type="evidence" value="ECO:0007669"/>
    <property type="project" value="InterPro"/>
</dbReference>
<dbReference type="CDD" id="cd00190">
    <property type="entry name" value="Tryp_SPc"/>
    <property type="match status" value="1"/>
</dbReference>
<dbReference type="FunFam" id="2.40.10.10:FF:000082">
    <property type="entry name" value="Plasma kallikrein"/>
    <property type="match status" value="1"/>
</dbReference>
<dbReference type="Gene3D" id="2.40.10.10">
    <property type="entry name" value="Trypsin-like serine proteases"/>
    <property type="match status" value="1"/>
</dbReference>
<dbReference type="InterPro" id="IPR040479">
    <property type="entry name" value="CLIP_SPH_mas"/>
</dbReference>
<dbReference type="InterPro" id="IPR009003">
    <property type="entry name" value="Peptidase_S1_PA"/>
</dbReference>
<dbReference type="InterPro" id="IPR043504">
    <property type="entry name" value="Peptidase_S1_PA_chymotrypsin"/>
</dbReference>
<dbReference type="InterPro" id="IPR001314">
    <property type="entry name" value="Peptidase_S1A"/>
</dbReference>
<dbReference type="InterPro" id="IPR001254">
    <property type="entry name" value="Trypsin_dom"/>
</dbReference>
<dbReference type="InterPro" id="IPR018114">
    <property type="entry name" value="TRYPSIN_HIS"/>
</dbReference>
<dbReference type="PANTHER" id="PTHR24258:SF140">
    <property type="entry name" value="BCDNA.GH08420-RELATED"/>
    <property type="match status" value="1"/>
</dbReference>
<dbReference type="PANTHER" id="PTHR24258">
    <property type="entry name" value="SERINE PROTEASE-RELATED"/>
    <property type="match status" value="1"/>
</dbReference>
<dbReference type="Pfam" id="PF18398">
    <property type="entry name" value="CLIP_SPH_mas"/>
    <property type="match status" value="5"/>
</dbReference>
<dbReference type="Pfam" id="PF00089">
    <property type="entry name" value="Trypsin"/>
    <property type="match status" value="1"/>
</dbReference>
<dbReference type="PRINTS" id="PR00722">
    <property type="entry name" value="CHYMOTRYPSIN"/>
</dbReference>
<dbReference type="SMART" id="SM00020">
    <property type="entry name" value="Tryp_SPc"/>
    <property type="match status" value="1"/>
</dbReference>
<dbReference type="SUPFAM" id="SSF50494">
    <property type="entry name" value="Trypsin-like serine proteases"/>
    <property type="match status" value="1"/>
</dbReference>
<dbReference type="PROSITE" id="PS50240">
    <property type="entry name" value="TRYPSIN_DOM"/>
    <property type="match status" value="1"/>
</dbReference>
<dbReference type="PROSITE" id="PS00134">
    <property type="entry name" value="TRYPSIN_HIS"/>
    <property type="match status" value="1"/>
</dbReference>
<keyword id="KW-0025">Alternative splicing</keyword>
<keyword id="KW-0966">Cell projection</keyword>
<keyword id="KW-0217">Developmental protein</keyword>
<keyword id="KW-1015">Disulfide bond</keyword>
<keyword id="KW-0325">Glycoprotein</keyword>
<keyword id="KW-1185">Reference proteome</keyword>
<keyword id="KW-0677">Repeat</keyword>
<keyword id="KW-0964">Secreted</keyword>
<keyword id="KW-0721">Serine protease homolog</keyword>
<keyword id="KW-0732">Signal</keyword>
<protein>
    <recommendedName>
        <fullName evidence="8">Protein masquerade</fullName>
    </recommendedName>
</protein>
<accession>Q9VZH2</accession>
<accession>M9PE44</accession>
<accession>Q24019</accession>
<accession>Q960I5</accession>
<proteinExistence type="evidence at protein level"/>
<name>MAS_DROME</name>
<gene>
    <name evidence="8 16" type="primary">mas</name>
    <name evidence="13" type="synonym">c-SPH79</name>
    <name evidence="13" type="synonym">SPH79</name>
    <name evidence="13 16" type="ORF">CG15002</name>
</gene>
<sequence length="1047" mass="111564">MPRHSSTMSRLVLPLIFSILLVSKPSPSQAQDESLAGSFLSGLLDTITSTADSKDCPGVCVHTLATLICYEVLDDVACPSPSMKCCIENAPAGKNATAVRATTTPKTTTTASTTTTQRTTTTVATTSTTKRTTTTSTTPKPKPKPQTKRPATSSTTKATVATTKKPSTTKKVATAKPKDKEEATKADDANKDCTGVCVADRIAEYCEAYLTSDGLCKEGTKCCVSLDEYSNGKLPKDIYIPAKHMSNLKPNQTLSEKSAPAKSSSTSTTSTTTTTSTTTTPEPARINNSSPKPTKHKKHPTTTTTEAAEEEEEQETEEDGEEEEPPLSNKLKSGQGQGQVLKECEGECMNGIFAIFCDDIDSDAFCPGEESCCVTGGASEATPSSKAPPTKPAIKHAPKPAAKPARPASPPPAPPSSTSGGGGGGDFLSQIISFAESTLNSPSPPPPPPQAPIQVPRCPGFCLLNIMAAFCERPSVLVSTPTTCAKGSVCCDNSRAGAPKPKLPPPTPSPTASPTAPPYVLPNTPSPDPREECPGSCIVSLLSFTCFKNAEMTDLFRCKRSGQICCAPKSKILEKQQFQTRNDTAYYPAPPPPPIGPPQAYPPQTPPYSYMNNPPPQGPPPQMAPHHPNPYQPPPPAPNYADYYPVSGPGLPPQPQPPMTTPPTTTTTTTTPRPHVYSKYVCGVKGTLRTGRSQALSFVSYARAKYGVQRTARQMTSAAGYSPNFNKSNERLVLGSAIVPIQIHNDKLGDLVESSSLQSNQLRSYHNHQAQADQPDLVYPEYYQQRSLYGLQSNFSGRRRARVVGGEDGENGEWCWQVALINSLNQYLCGAALIGTQWVLTAAHCVTNIVRSGDAIYVRVGDYDLTRKYGSPGAQTLRVATTYIHHNHNSQTLDNDIALLKLHGQAELRDGVCLVCLPARGVSHAAGKRCTVTGYGYMGEAGPIPLRVREAEIPIVSDTECIRKVNAVTEKIFILPASSFCAGGEEGHDACQGDGGGPLVCQDDGFYELAGLVSWGFGCGRQDVPGVYVKTSSFIGWINQIISVNNL</sequence>
<evidence type="ECO:0000250" key="1">
    <source>
        <dbReference type="UniProtKB" id="Q9VB68"/>
    </source>
</evidence>
<evidence type="ECO:0000255" key="2"/>
<evidence type="ECO:0000255" key="3">
    <source>
        <dbReference type="PROSITE-ProRule" id="PRU00274"/>
    </source>
</evidence>
<evidence type="ECO:0000255" key="4">
    <source>
        <dbReference type="PROSITE-ProRule" id="PRU00498"/>
    </source>
</evidence>
<evidence type="ECO:0000256" key="5">
    <source>
        <dbReference type="SAM" id="MobiDB-lite"/>
    </source>
</evidence>
<evidence type="ECO:0000269" key="6">
    <source>
    </source>
</evidence>
<evidence type="ECO:0000269" key="7">
    <source>
    </source>
</evidence>
<evidence type="ECO:0000303" key="8">
    <source>
    </source>
</evidence>
<evidence type="ECO:0000305" key="9"/>
<evidence type="ECO:0000305" key="10">
    <source>
    </source>
</evidence>
<evidence type="ECO:0000305" key="11">
    <source>
    </source>
</evidence>
<evidence type="ECO:0000312" key="12">
    <source>
        <dbReference type="EMBL" id="AAC46512.1"/>
    </source>
</evidence>
<evidence type="ECO:0000312" key="13">
    <source>
        <dbReference type="EMBL" id="AAF47850.1"/>
    </source>
</evidence>
<evidence type="ECO:0000312" key="14">
    <source>
        <dbReference type="EMBL" id="AAK93468.1"/>
    </source>
</evidence>
<evidence type="ECO:0000312" key="15">
    <source>
        <dbReference type="EMBL" id="AAN71352.1"/>
    </source>
</evidence>
<evidence type="ECO:0000312" key="16">
    <source>
        <dbReference type="FlyBase" id="FBgn0011653"/>
    </source>
</evidence>
<evidence type="ECO:0000312" key="17">
    <source>
        <dbReference type="Proteomes" id="UP000000803"/>
    </source>
</evidence>
<reference evidence="12" key="1">
    <citation type="journal article" date="1995" name="Genes Dev.">
        <title>Masquerade: a novel secreted serine protease-like molecule is required for somatic muscle attachment in the Drosophila embryo.</title>
        <authorList>
            <person name="Murugasu-Oei B."/>
            <person name="Rodrigues V."/>
            <person name="Yang X."/>
            <person name="Chia W."/>
        </authorList>
    </citation>
    <scope>NUCLEOTIDE SEQUENCE [GENOMIC DNA]</scope>
    <scope>NUCLEOTIDE SEQUENCE [MRNA]</scope>
    <scope>FUNCTION</scope>
    <scope>SUBCELLULAR LOCATION</scope>
    <scope>DEVELOPMENTAL STAGE</scope>
    <scope>PROTEOLYTIC CLEAVAGE</scope>
    <scope>DISRUPTION PHENOTYPE</scope>
</reference>
<reference evidence="17" key="2">
    <citation type="journal article" date="2000" name="Science">
        <title>The genome sequence of Drosophila melanogaster.</title>
        <authorList>
            <person name="Adams M.D."/>
            <person name="Celniker S.E."/>
            <person name="Holt R.A."/>
            <person name="Evans C.A."/>
            <person name="Gocayne J.D."/>
            <person name="Amanatides P.G."/>
            <person name="Scherer S.E."/>
            <person name="Li P.W."/>
            <person name="Hoskins R.A."/>
            <person name="Galle R.F."/>
            <person name="George R.A."/>
            <person name="Lewis S.E."/>
            <person name="Richards S."/>
            <person name="Ashburner M."/>
            <person name="Henderson S.N."/>
            <person name="Sutton G.G."/>
            <person name="Wortman J.R."/>
            <person name="Yandell M.D."/>
            <person name="Zhang Q."/>
            <person name="Chen L.X."/>
            <person name="Brandon R.C."/>
            <person name="Rogers Y.-H.C."/>
            <person name="Blazej R.G."/>
            <person name="Champe M."/>
            <person name="Pfeiffer B.D."/>
            <person name="Wan K.H."/>
            <person name="Doyle C."/>
            <person name="Baxter E.G."/>
            <person name="Helt G."/>
            <person name="Nelson C.R."/>
            <person name="Miklos G.L.G."/>
            <person name="Abril J.F."/>
            <person name="Agbayani A."/>
            <person name="An H.-J."/>
            <person name="Andrews-Pfannkoch C."/>
            <person name="Baldwin D."/>
            <person name="Ballew R.M."/>
            <person name="Basu A."/>
            <person name="Baxendale J."/>
            <person name="Bayraktaroglu L."/>
            <person name="Beasley E.M."/>
            <person name="Beeson K.Y."/>
            <person name="Benos P.V."/>
            <person name="Berman B.P."/>
            <person name="Bhandari D."/>
            <person name="Bolshakov S."/>
            <person name="Borkova D."/>
            <person name="Botchan M.R."/>
            <person name="Bouck J."/>
            <person name="Brokstein P."/>
            <person name="Brottier P."/>
            <person name="Burtis K.C."/>
            <person name="Busam D.A."/>
            <person name="Butler H."/>
            <person name="Cadieu E."/>
            <person name="Center A."/>
            <person name="Chandra I."/>
            <person name="Cherry J.M."/>
            <person name="Cawley S."/>
            <person name="Dahlke C."/>
            <person name="Davenport L.B."/>
            <person name="Davies P."/>
            <person name="de Pablos B."/>
            <person name="Delcher A."/>
            <person name="Deng Z."/>
            <person name="Mays A.D."/>
            <person name="Dew I."/>
            <person name="Dietz S.M."/>
            <person name="Dodson K."/>
            <person name="Doup L.E."/>
            <person name="Downes M."/>
            <person name="Dugan-Rocha S."/>
            <person name="Dunkov B.C."/>
            <person name="Dunn P."/>
            <person name="Durbin K.J."/>
            <person name="Evangelista C.C."/>
            <person name="Ferraz C."/>
            <person name="Ferriera S."/>
            <person name="Fleischmann W."/>
            <person name="Fosler C."/>
            <person name="Gabrielian A.E."/>
            <person name="Garg N.S."/>
            <person name="Gelbart W.M."/>
            <person name="Glasser K."/>
            <person name="Glodek A."/>
            <person name="Gong F."/>
            <person name="Gorrell J.H."/>
            <person name="Gu Z."/>
            <person name="Guan P."/>
            <person name="Harris M."/>
            <person name="Harris N.L."/>
            <person name="Harvey D.A."/>
            <person name="Heiman T.J."/>
            <person name="Hernandez J.R."/>
            <person name="Houck J."/>
            <person name="Hostin D."/>
            <person name="Houston K.A."/>
            <person name="Howland T.J."/>
            <person name="Wei M.-H."/>
            <person name="Ibegwam C."/>
            <person name="Jalali M."/>
            <person name="Kalush F."/>
            <person name="Karpen G.H."/>
            <person name="Ke Z."/>
            <person name="Kennison J.A."/>
            <person name="Ketchum K.A."/>
            <person name="Kimmel B.E."/>
            <person name="Kodira C.D."/>
            <person name="Kraft C.L."/>
            <person name="Kravitz S."/>
            <person name="Kulp D."/>
            <person name="Lai Z."/>
            <person name="Lasko P."/>
            <person name="Lei Y."/>
            <person name="Levitsky A.A."/>
            <person name="Li J.H."/>
            <person name="Li Z."/>
            <person name="Liang Y."/>
            <person name="Lin X."/>
            <person name="Liu X."/>
            <person name="Mattei B."/>
            <person name="McIntosh T.C."/>
            <person name="McLeod M.P."/>
            <person name="McPherson D."/>
            <person name="Merkulov G."/>
            <person name="Milshina N.V."/>
            <person name="Mobarry C."/>
            <person name="Morris J."/>
            <person name="Moshrefi A."/>
            <person name="Mount S.M."/>
            <person name="Moy M."/>
            <person name="Murphy B."/>
            <person name="Murphy L."/>
            <person name="Muzny D.M."/>
            <person name="Nelson D.L."/>
            <person name="Nelson D.R."/>
            <person name="Nelson K.A."/>
            <person name="Nixon K."/>
            <person name="Nusskern D.R."/>
            <person name="Pacleb J.M."/>
            <person name="Palazzolo M."/>
            <person name="Pittman G.S."/>
            <person name="Pan S."/>
            <person name="Pollard J."/>
            <person name="Puri V."/>
            <person name="Reese M.G."/>
            <person name="Reinert K."/>
            <person name="Remington K."/>
            <person name="Saunders R.D.C."/>
            <person name="Scheeler F."/>
            <person name="Shen H."/>
            <person name="Shue B.C."/>
            <person name="Siden-Kiamos I."/>
            <person name="Simpson M."/>
            <person name="Skupski M.P."/>
            <person name="Smith T.J."/>
            <person name="Spier E."/>
            <person name="Spradling A.C."/>
            <person name="Stapleton M."/>
            <person name="Strong R."/>
            <person name="Sun E."/>
            <person name="Svirskas R."/>
            <person name="Tector C."/>
            <person name="Turner R."/>
            <person name="Venter E."/>
            <person name="Wang A.H."/>
            <person name="Wang X."/>
            <person name="Wang Z.-Y."/>
            <person name="Wassarman D.A."/>
            <person name="Weinstock G.M."/>
            <person name="Weissenbach J."/>
            <person name="Williams S.M."/>
            <person name="Woodage T."/>
            <person name="Worley K.C."/>
            <person name="Wu D."/>
            <person name="Yang S."/>
            <person name="Yao Q.A."/>
            <person name="Ye J."/>
            <person name="Yeh R.-F."/>
            <person name="Zaveri J.S."/>
            <person name="Zhan M."/>
            <person name="Zhang G."/>
            <person name="Zhao Q."/>
            <person name="Zheng L."/>
            <person name="Zheng X.H."/>
            <person name="Zhong F.N."/>
            <person name="Zhong W."/>
            <person name="Zhou X."/>
            <person name="Zhu S.C."/>
            <person name="Zhu X."/>
            <person name="Smith H.O."/>
            <person name="Gibbs R.A."/>
            <person name="Myers E.W."/>
            <person name="Rubin G.M."/>
            <person name="Venter J.C."/>
        </authorList>
    </citation>
    <scope>NUCLEOTIDE SEQUENCE [LARGE SCALE GENOMIC DNA]</scope>
    <source>
        <strain>Berkeley</strain>
    </source>
</reference>
<reference evidence="17" key="3">
    <citation type="journal article" date="2002" name="Genome Biol.">
        <title>Annotation of the Drosophila melanogaster euchromatic genome: a systematic review.</title>
        <authorList>
            <person name="Misra S."/>
            <person name="Crosby M.A."/>
            <person name="Mungall C.J."/>
            <person name="Matthews B.B."/>
            <person name="Campbell K.S."/>
            <person name="Hradecky P."/>
            <person name="Huang Y."/>
            <person name="Kaminker J.S."/>
            <person name="Millburn G.H."/>
            <person name="Prochnik S.E."/>
            <person name="Smith C.D."/>
            <person name="Tupy J.L."/>
            <person name="Whitfield E.J."/>
            <person name="Bayraktaroglu L."/>
            <person name="Berman B.P."/>
            <person name="Bettencourt B.R."/>
            <person name="Celniker S.E."/>
            <person name="de Grey A.D.N.J."/>
            <person name="Drysdale R.A."/>
            <person name="Harris N.L."/>
            <person name="Richter J."/>
            <person name="Russo S."/>
            <person name="Schroeder A.J."/>
            <person name="Shu S.Q."/>
            <person name="Stapleton M."/>
            <person name="Yamada C."/>
            <person name="Ashburner M."/>
            <person name="Gelbart W.M."/>
            <person name="Rubin G.M."/>
            <person name="Lewis S.E."/>
        </authorList>
    </citation>
    <scope>GENOME REANNOTATION</scope>
    <source>
        <strain>Berkeley</strain>
    </source>
</reference>
<reference evidence="14 15" key="4">
    <citation type="journal article" date="2002" name="Genome Biol.">
        <title>A Drosophila full-length cDNA resource.</title>
        <authorList>
            <person name="Stapleton M."/>
            <person name="Carlson J.W."/>
            <person name="Brokstein P."/>
            <person name="Yu C."/>
            <person name="Champe M."/>
            <person name="George R.A."/>
            <person name="Guarin H."/>
            <person name="Kronmiller B."/>
            <person name="Pacleb J.M."/>
            <person name="Park S."/>
            <person name="Wan K.H."/>
            <person name="Rubin G.M."/>
            <person name="Celniker S.E."/>
        </authorList>
    </citation>
    <scope>NUCLEOTIDE SEQUENCE [LARGE SCALE MRNA]</scope>
    <source>
        <strain>Berkeley</strain>
        <tissue>Embryo</tissue>
        <tissue>Larva</tissue>
        <tissue>Pupae</tissue>
    </source>
</reference>
<reference evidence="9" key="5">
    <citation type="journal article" date="1996" name="Mech. Dev.">
        <title>Mutations in masquerade, a novel serine-protease-like molecule, affect axonal guidance and taste behavior in Drosophila.</title>
        <authorList>
            <person name="Murugasu-Oei B."/>
            <person name="Balakrishnan R."/>
            <person name="Yang X."/>
            <person name="Chia W."/>
            <person name="Rodrigues V."/>
        </authorList>
    </citation>
    <scope>FUNCTION</scope>
    <scope>SUBCELLULAR LOCATION</scope>
    <scope>DEVELOPMENTAL STAGE</scope>
    <scope>DISRUPTION PHENOTYPE</scope>
</reference>
<organism evidence="17">
    <name type="scientific">Drosophila melanogaster</name>
    <name type="common">Fruit fly</name>
    <dbReference type="NCBI Taxonomy" id="7227"/>
    <lineage>
        <taxon>Eukaryota</taxon>
        <taxon>Metazoa</taxon>
        <taxon>Ecdysozoa</taxon>
        <taxon>Arthropoda</taxon>
        <taxon>Hexapoda</taxon>
        <taxon>Insecta</taxon>
        <taxon>Pterygota</taxon>
        <taxon>Neoptera</taxon>
        <taxon>Endopterygota</taxon>
        <taxon>Diptera</taxon>
        <taxon>Brachycera</taxon>
        <taxon>Muscomorpha</taxon>
        <taxon>Ephydroidea</taxon>
        <taxon>Drosophilidae</taxon>
        <taxon>Drosophila</taxon>
        <taxon>Sophophora</taxon>
    </lineage>
</organism>
<comment type="function">
    <text evidence="6 7">In embryogenesis, has a role in somatic muscle attachment and in the development of axonal pathways probably by stabilizing cell-matrix adhesion and/or by acting as a competitive antagonist of serine proteases.</text>
</comment>
<comment type="subcellular location">
    <subcellularLocation>
        <location evidence="6">Secreted</location>
    </subcellularLocation>
    <subcellularLocation>
        <location evidence="6 7">Cell projection</location>
        <location evidence="6 7">Axon</location>
    </subcellularLocation>
    <text evidence="10 11">Localizes to vesicle-like structures in epidermal cells.</text>
</comment>
<comment type="alternative products">
    <event type="alternative splicing"/>
    <isoform>
        <id>Q9VZH2-1</id>
        <name evidence="16">B</name>
        <sequence type="displayed"/>
    </isoform>
    <isoform>
        <id>Q9VZH2-2</id>
        <name evidence="16">C</name>
        <sequence type="described" ref="VSP_059330"/>
    </isoform>
</comment>
<comment type="developmental stage">
    <text evidence="6 7">In embryos, from stage 14 till stage 17, expressed in epidermal cells, tracheal system and denticle belts (at protein level) (PubMed:7851790). In larva and in early pupa, expressed in brain cells along the ventral midline, in cell bodies in the cellular cortex of the ventral nerve cord, in cells contributing to the perineum around the cerebral hemispheres and in axons of the longitudinal connectives of the central nervous system (CNS); at low level, expressed throughout the antennal disk (at protein level) (PubMed:7851790, PubMed:8817456). In pupae, expressed in pupal appendages and body epidermis, in the proboscis and pseudotrachea (at protein level) (PubMed:8817456). Expressed in embryos; from stage 11 until the end of stage 13 expressed in small cells along the midline of the central nervous system; at state 12, expressed in the epidermis; from stage 13 onwards, expressed in the epidermal cells in particular in the anterior border of each segment; from stage 14-17, detected in the cells of the tracheal system (PubMed:7851790). Detected in larva and pupa, but not in adult flies (PubMed:7851790, PubMed:8817456).</text>
</comment>
<comment type="domain">
    <text evidence="9">The CLIP domain consists of 37-55 residues which are 'knitted' together usually by 3 conserved disulfide bonds forming a clip-like compact structure.</text>
</comment>
<comment type="PTM">
    <text evidence="6">Proteolytically cleaved and thereafter secreted.</text>
</comment>
<comment type="disruption phenotype">
    <text evidence="6 7">Embryonic lethal as a result of neuronal defects in the central nervous system (CNS) and peripheral nervous system (PNS) from stage 15, and defective muscle attachment from stage 16 (PubMed:7851790, PubMed:8817456). Defects in the CNS include stalling of the growth cones of pioneer axons of anterior and posterior corner cells (aCC and pCC) leading to abnormalities in the horizontal commissures and discontinuities in the longitudinal connectives respectively (PubMed:8817456). Defects in the PNS include defects in the location of the sense organs and in their projections in the sensory nerves, including missing neurons and more often defects in the axonal paths with erroneous connections with the ventral ganglia (PubMed:8817456). Defects in muscle attachment include the appearance of myospheroid-like bodies and the collapse of lateral transverse muscles 1-3 (PubMed:7851790).</text>
</comment>
<comment type="similarity">
    <text evidence="9">Belongs to the peptidase S1 family. CLIP subfamily.</text>
</comment>
<comment type="caution">
    <text evidence="9">Lacks the conserved Ser residue within the catalytic triad which is replaced by a Gly residue, probably resulting in a loss of proteolytic activity.</text>
</comment>
<comment type="sequence caution" evidence="9">
    <conflict type="erroneous initiation">
        <sequence resource="EMBL-CDS" id="AAK93468"/>
    </conflict>
    <text>Truncated N-terminus.</text>
</comment>